<feature type="chain" id="PRO_0000082995" description="Methionyl-tRNA formyltransferase">
    <location>
        <begin position="1"/>
        <end position="315"/>
    </location>
</feature>
<feature type="binding site" evidence="1">
    <location>
        <begin position="110"/>
        <end position="113"/>
    </location>
    <ligand>
        <name>(6S)-5,6,7,8-tetrahydrofolate</name>
        <dbReference type="ChEBI" id="CHEBI:57453"/>
    </ligand>
</feature>
<accession>Q741F8</accession>
<dbReference type="EC" id="2.1.2.9" evidence="1"/>
<dbReference type="EMBL" id="AE016958">
    <property type="protein sequence ID" value="AAS03450.1"/>
    <property type="molecule type" value="Genomic_DNA"/>
</dbReference>
<dbReference type="RefSeq" id="WP_003877627.1">
    <property type="nucleotide sequence ID" value="NZ_CP106873.1"/>
</dbReference>
<dbReference type="SMR" id="Q741F8"/>
<dbReference type="STRING" id="262316.MAP_1133"/>
<dbReference type="KEGG" id="mpa:MAP_1133"/>
<dbReference type="PATRIC" id="fig|262316.17.peg.1192"/>
<dbReference type="eggNOG" id="COG0223">
    <property type="taxonomic scope" value="Bacteria"/>
</dbReference>
<dbReference type="HOGENOM" id="CLU_033347_1_0_11"/>
<dbReference type="Proteomes" id="UP000000580">
    <property type="component" value="Chromosome"/>
</dbReference>
<dbReference type="GO" id="GO:0005829">
    <property type="term" value="C:cytosol"/>
    <property type="evidence" value="ECO:0007669"/>
    <property type="project" value="TreeGrafter"/>
</dbReference>
<dbReference type="GO" id="GO:0004479">
    <property type="term" value="F:methionyl-tRNA formyltransferase activity"/>
    <property type="evidence" value="ECO:0007669"/>
    <property type="project" value="UniProtKB-UniRule"/>
</dbReference>
<dbReference type="CDD" id="cd08646">
    <property type="entry name" value="FMT_core_Met-tRNA-FMT_N"/>
    <property type="match status" value="1"/>
</dbReference>
<dbReference type="CDD" id="cd08704">
    <property type="entry name" value="Met_tRNA_FMT_C"/>
    <property type="match status" value="1"/>
</dbReference>
<dbReference type="FunFam" id="3.40.50.12230:FF:000001">
    <property type="entry name" value="Methionyl-tRNA formyltransferase"/>
    <property type="match status" value="1"/>
</dbReference>
<dbReference type="Gene3D" id="3.40.50.12230">
    <property type="match status" value="1"/>
</dbReference>
<dbReference type="HAMAP" id="MF_00182">
    <property type="entry name" value="Formyl_trans"/>
    <property type="match status" value="1"/>
</dbReference>
<dbReference type="InterPro" id="IPR005794">
    <property type="entry name" value="Fmt"/>
</dbReference>
<dbReference type="InterPro" id="IPR005793">
    <property type="entry name" value="Formyl_trans_C"/>
</dbReference>
<dbReference type="InterPro" id="IPR002376">
    <property type="entry name" value="Formyl_transf_N"/>
</dbReference>
<dbReference type="InterPro" id="IPR036477">
    <property type="entry name" value="Formyl_transf_N_sf"/>
</dbReference>
<dbReference type="InterPro" id="IPR011034">
    <property type="entry name" value="Formyl_transferase-like_C_sf"/>
</dbReference>
<dbReference type="InterPro" id="IPR044135">
    <property type="entry name" value="Met-tRNA-FMT_C"/>
</dbReference>
<dbReference type="InterPro" id="IPR041711">
    <property type="entry name" value="Met-tRNA-FMT_N"/>
</dbReference>
<dbReference type="NCBIfam" id="TIGR00460">
    <property type="entry name" value="fmt"/>
    <property type="match status" value="1"/>
</dbReference>
<dbReference type="PANTHER" id="PTHR11138">
    <property type="entry name" value="METHIONYL-TRNA FORMYLTRANSFERASE"/>
    <property type="match status" value="1"/>
</dbReference>
<dbReference type="PANTHER" id="PTHR11138:SF5">
    <property type="entry name" value="METHIONYL-TRNA FORMYLTRANSFERASE, MITOCHONDRIAL"/>
    <property type="match status" value="1"/>
</dbReference>
<dbReference type="Pfam" id="PF02911">
    <property type="entry name" value="Formyl_trans_C"/>
    <property type="match status" value="1"/>
</dbReference>
<dbReference type="Pfam" id="PF00551">
    <property type="entry name" value="Formyl_trans_N"/>
    <property type="match status" value="1"/>
</dbReference>
<dbReference type="SUPFAM" id="SSF50486">
    <property type="entry name" value="FMT C-terminal domain-like"/>
    <property type="match status" value="1"/>
</dbReference>
<dbReference type="SUPFAM" id="SSF53328">
    <property type="entry name" value="Formyltransferase"/>
    <property type="match status" value="1"/>
</dbReference>
<sequence length="315" mass="33290">MRLVFAGTPEPALPALRRLLDSPRHEMIAVLTRPDAASGRRGKPEPSPVAREALDRGIPVLRPARPNSPEFVAELAQLAPDCCAVVAYGALLRDELLAVPPHGWINLHFSLLPAWRGAAPVQAAIAAGDIITGASTFRIEPALDSGPIYGVVTEAIRPTDTAGELLARLAVSGAELLSATLDGIADSTLTPRPQPAEGVSIAPKITVEQARVRWDLPAPVVERRIRAVTPNPGAWTVISDLRIKLGPVRLGAASDLPAPPEPLPPGAIHVDRKSVWVGTGSDPVRLGQIQPPGKKFMNAVDWARGARLDPAARAT</sequence>
<evidence type="ECO:0000255" key="1">
    <source>
        <dbReference type="HAMAP-Rule" id="MF_00182"/>
    </source>
</evidence>
<organism>
    <name type="scientific">Mycolicibacterium paratuberculosis (strain ATCC BAA-968 / K-10)</name>
    <name type="common">Mycobacterium paratuberculosis</name>
    <dbReference type="NCBI Taxonomy" id="262316"/>
    <lineage>
        <taxon>Bacteria</taxon>
        <taxon>Bacillati</taxon>
        <taxon>Actinomycetota</taxon>
        <taxon>Actinomycetes</taxon>
        <taxon>Mycobacteriales</taxon>
        <taxon>Mycobacteriaceae</taxon>
        <taxon>Mycobacterium</taxon>
        <taxon>Mycobacterium avium complex (MAC)</taxon>
    </lineage>
</organism>
<gene>
    <name evidence="1" type="primary">fmt</name>
    <name type="ordered locus">MAP_1133</name>
</gene>
<keyword id="KW-0648">Protein biosynthesis</keyword>
<keyword id="KW-1185">Reference proteome</keyword>
<keyword id="KW-0808">Transferase</keyword>
<comment type="function">
    <text evidence="1">Attaches a formyl group to the free amino group of methionyl-tRNA(fMet). The formyl group appears to play a dual role in the initiator identity of N-formylmethionyl-tRNA by promoting its recognition by IF2 and preventing the misappropriation of this tRNA by the elongation apparatus.</text>
</comment>
<comment type="catalytic activity">
    <reaction evidence="1">
        <text>L-methionyl-tRNA(fMet) + (6R)-10-formyltetrahydrofolate = N-formyl-L-methionyl-tRNA(fMet) + (6S)-5,6,7,8-tetrahydrofolate + H(+)</text>
        <dbReference type="Rhea" id="RHEA:24380"/>
        <dbReference type="Rhea" id="RHEA-COMP:9952"/>
        <dbReference type="Rhea" id="RHEA-COMP:9953"/>
        <dbReference type="ChEBI" id="CHEBI:15378"/>
        <dbReference type="ChEBI" id="CHEBI:57453"/>
        <dbReference type="ChEBI" id="CHEBI:78530"/>
        <dbReference type="ChEBI" id="CHEBI:78844"/>
        <dbReference type="ChEBI" id="CHEBI:195366"/>
        <dbReference type="EC" id="2.1.2.9"/>
    </reaction>
</comment>
<comment type="similarity">
    <text evidence="1">Belongs to the Fmt family.</text>
</comment>
<proteinExistence type="inferred from homology"/>
<name>FMT_MYCPA</name>
<protein>
    <recommendedName>
        <fullName evidence="1">Methionyl-tRNA formyltransferase</fullName>
        <ecNumber evidence="1">2.1.2.9</ecNumber>
    </recommendedName>
</protein>
<reference key="1">
    <citation type="journal article" date="2005" name="Proc. Natl. Acad. Sci. U.S.A.">
        <title>The complete genome sequence of Mycobacterium avium subspecies paratuberculosis.</title>
        <authorList>
            <person name="Li L."/>
            <person name="Bannantine J.P."/>
            <person name="Zhang Q."/>
            <person name="Amonsin A."/>
            <person name="May B.J."/>
            <person name="Alt D."/>
            <person name="Banerji N."/>
            <person name="Kanjilal S."/>
            <person name="Kapur V."/>
        </authorList>
    </citation>
    <scope>NUCLEOTIDE SEQUENCE [LARGE SCALE GENOMIC DNA]</scope>
    <source>
        <strain>ATCC BAA-968 / K-10</strain>
    </source>
</reference>